<reference key="1">
    <citation type="journal article" date="2000" name="J. Immunol.">
        <title>Pro-carboxypeptidase R is an acute phase protein in the mouse, whereas carboxypeptidase N is not.</title>
        <authorList>
            <person name="Sato T."/>
            <person name="Miwa T."/>
            <person name="Akatsu H."/>
            <person name="Matsukawa N."/>
            <person name="Obata K."/>
            <person name="Okada N."/>
            <person name="Campbell W."/>
            <person name="Okada H."/>
        </authorList>
    </citation>
    <scope>NUCLEOTIDE SEQUENCE [MRNA]</scope>
    <scope>TISSUE SPECIFICITY</scope>
    <scope>SUBCELLULAR LOCATION</scope>
    <source>
        <tissue>Liver</tissue>
    </source>
</reference>
<reference key="2">
    <citation type="journal article" date="2001" name="J. Immunol.">
        <title>Characterization of mouse carboxypeptidase N small active subunit gene structure.</title>
        <authorList>
            <person name="Matthews K.W."/>
            <person name="Wetsel R.A."/>
        </authorList>
    </citation>
    <scope>NUCLEOTIDE SEQUENCE [MRNA]</scope>
    <scope>TISSUE SPECIFICITY</scope>
    <source>
        <tissue>Liver</tissue>
    </source>
</reference>
<reference key="3">
    <citation type="journal article" date="2004" name="Genome Res.">
        <title>The status, quality, and expansion of the NIH full-length cDNA project: the Mammalian Gene Collection (MGC).</title>
        <authorList>
            <consortium name="The MGC Project Team"/>
        </authorList>
    </citation>
    <scope>NUCLEOTIDE SEQUENCE [LARGE SCALE MRNA]</scope>
    <source>
        <strain>FVB/N</strain>
        <tissue>Liver</tissue>
    </source>
</reference>
<reference key="4">
    <citation type="journal article" date="2010" name="Cell">
        <title>A tissue-specific atlas of mouse protein phosphorylation and expression.</title>
        <authorList>
            <person name="Huttlin E.L."/>
            <person name="Jedrychowski M.P."/>
            <person name="Elias J.E."/>
            <person name="Goswami T."/>
            <person name="Rad R."/>
            <person name="Beausoleil S.A."/>
            <person name="Villen J."/>
            <person name="Haas W."/>
            <person name="Sowa M.E."/>
            <person name="Gygi S.P."/>
        </authorList>
    </citation>
    <scope>IDENTIFICATION BY MASS SPECTROMETRY [LARGE SCALE ANALYSIS]</scope>
    <source>
        <tissue>Brown adipose tissue</tissue>
        <tissue>Heart</tissue>
        <tissue>Liver</tissue>
        <tissue>Lung</tissue>
    </source>
</reference>
<sequence length="457" mass="51845">MPDLPSAFLPLLLLSKFVTPVTFRHHRYDDLVRTLYKVHNQCPDITRLYNIGRSVKGRYLYVLEFSDYPGIHEPLEPEVKYVGNMHGNEVLGRELLLQLSEFLCEEFRNRNQRILRLIQDTRIHILPSMNPDGYEVAAAQGPNMSGYLVGRNNANGVDLNRNFPDLNTYFYYNSKNGGPNHHLPLPDNWKSQVEPETRAVIQWIRSLNFVLSANMHGGAVVANYPYDKSLEHRFRGPHRTSNSPTPDDELFQTLAKVYSYAHGWMHQGWNCGDYFPDGITNGASWYSLSKGMQDFNYLHTNCFEITLELSCDKFPRQEELQREWLGNREALIQFLEQVHQGIKGMVLDENSNNLTGAVISVTGINHDVTSGEHGDYFRLLLPGTYSVTAKAPGYDPKTVTVTVGPAGPTVVDFQLKRSSSQVYPVQRAPGRGQGGRAKQPRTSRKKDPATKRHRGPA</sequence>
<feature type="signal peptide" evidence="4">
    <location>
        <begin position="1"/>
        <end position="23"/>
    </location>
</feature>
<feature type="chain" id="PRO_0000042578" description="Carboxypeptidase N catalytic chain">
    <location>
        <begin position="24"/>
        <end position="457"/>
    </location>
</feature>
<feature type="domain" description="Peptidase M14" evidence="5">
    <location>
        <begin position="24"/>
        <end position="338"/>
    </location>
</feature>
<feature type="region of interest" description="Disordered" evidence="6">
    <location>
        <begin position="418"/>
        <end position="457"/>
    </location>
</feature>
<feature type="active site" description="Proton donor/acceptor" evidence="5">
    <location>
        <position position="308"/>
    </location>
</feature>
<feature type="binding site" evidence="5">
    <location>
        <position position="86"/>
    </location>
    <ligand>
        <name>Zn(2+)</name>
        <dbReference type="ChEBI" id="CHEBI:29105"/>
        <note>catalytic</note>
    </ligand>
</feature>
<feature type="binding site" evidence="5">
    <location>
        <position position="89"/>
    </location>
    <ligand>
        <name>Zn(2+)</name>
        <dbReference type="ChEBI" id="CHEBI:29105"/>
        <note>catalytic</note>
    </ligand>
</feature>
<feature type="binding site" evidence="5">
    <location>
        <position position="216"/>
    </location>
    <ligand>
        <name>Zn(2+)</name>
        <dbReference type="ChEBI" id="CHEBI:29105"/>
        <note>catalytic</note>
    </ligand>
</feature>
<feature type="glycosylation site" description="O-linked (GalNAc...) threonine" evidence="1">
    <location>
        <position position="400"/>
    </location>
</feature>
<feature type="glycosylation site" description="O-linked (GalNAc...) threonine" evidence="1">
    <location>
        <position position="402"/>
    </location>
</feature>
<feature type="glycosylation site" description="O-linked (GalNAc...) threonine" evidence="1">
    <location>
        <position position="409"/>
    </location>
</feature>
<feature type="disulfide bond" evidence="1">
    <location>
        <begin position="42"/>
        <end position="104"/>
    </location>
</feature>
<feature type="disulfide bond" evidence="3">
    <location>
        <begin position="271"/>
        <end position="311"/>
    </location>
</feature>
<feature type="sequence conflict" description="In Ref. 3; AAH14692." evidence="9" ref="3">
    <original>L</original>
    <variation>LL</variation>
    <location>
        <position position="381"/>
    </location>
</feature>
<keyword id="KW-0121">Carboxypeptidase</keyword>
<keyword id="KW-1015">Disulfide bond</keyword>
<keyword id="KW-0325">Glycoprotein</keyword>
<keyword id="KW-0378">Hydrolase</keyword>
<keyword id="KW-0479">Metal-binding</keyword>
<keyword id="KW-0482">Metalloprotease</keyword>
<keyword id="KW-0645">Protease</keyword>
<keyword id="KW-1185">Reference proteome</keyword>
<keyword id="KW-0964">Secreted</keyword>
<keyword id="KW-0732">Signal</keyword>
<keyword id="KW-0862">Zinc</keyword>
<evidence type="ECO:0000250" key="1"/>
<evidence type="ECO:0000250" key="2">
    <source>
        <dbReference type="UniProtKB" id="P00730"/>
    </source>
</evidence>
<evidence type="ECO:0000250" key="3">
    <source>
        <dbReference type="UniProtKB" id="P14384"/>
    </source>
</evidence>
<evidence type="ECO:0000255" key="4"/>
<evidence type="ECO:0000255" key="5">
    <source>
        <dbReference type="PROSITE-ProRule" id="PRU01379"/>
    </source>
</evidence>
<evidence type="ECO:0000256" key="6">
    <source>
        <dbReference type="SAM" id="MobiDB-lite"/>
    </source>
</evidence>
<evidence type="ECO:0000269" key="7">
    <source>
    </source>
</evidence>
<evidence type="ECO:0000269" key="8">
    <source>
    </source>
</evidence>
<evidence type="ECO:0000305" key="9"/>
<comment type="function">
    <text evidence="1">Protects the body from potent vasoactive and inflammatory peptides containing C-terminal Arg or Lys (such as kinins or anaphylatoxins) which are released into the circulation.</text>
</comment>
<comment type="catalytic activity">
    <reaction>
        <text>Release of a C-terminal basic amino acid, preferentially lysine.</text>
        <dbReference type="EC" id="3.4.17.3"/>
    </reaction>
</comment>
<comment type="cofactor">
    <cofactor evidence="2">
        <name>Zn(2+)</name>
        <dbReference type="ChEBI" id="CHEBI:29105"/>
    </cofactor>
    <text evidence="2">Binds 1 zinc ion per subunit.</text>
</comment>
<comment type="subunit">
    <text evidence="1">Tetramer of two catalytic chains and two glycosylated inactive chains.</text>
</comment>
<comment type="subcellular location">
    <subcellularLocation>
        <location evidence="7">Secreted</location>
        <location evidence="7">Extracellular space</location>
    </subcellularLocation>
</comment>
<comment type="tissue specificity">
    <text evidence="7 8">Mainly expressed in liver. Also detected in lung, stomach, intestine, spleen and kidney.</text>
</comment>
<comment type="similarity">
    <text evidence="9">Belongs to the peptidase M14 family.</text>
</comment>
<name>CBPN_MOUSE</name>
<accession>Q9JJN5</accession>
<accession>Q91WM9</accession>
<proteinExistence type="evidence at protein level"/>
<protein>
    <recommendedName>
        <fullName>Carboxypeptidase N catalytic chain</fullName>
        <shortName>CPN</shortName>
        <ecNumber>3.4.17.3</ecNumber>
    </recommendedName>
    <alternativeName>
        <fullName>Carboxypeptidase N polypeptide 1</fullName>
    </alternativeName>
    <alternativeName>
        <fullName>Carboxypeptidase N small subunit</fullName>
    </alternativeName>
</protein>
<gene>
    <name type="primary">Cpn1</name>
</gene>
<organism>
    <name type="scientific">Mus musculus</name>
    <name type="common">Mouse</name>
    <dbReference type="NCBI Taxonomy" id="10090"/>
    <lineage>
        <taxon>Eukaryota</taxon>
        <taxon>Metazoa</taxon>
        <taxon>Chordata</taxon>
        <taxon>Craniata</taxon>
        <taxon>Vertebrata</taxon>
        <taxon>Euteleostomi</taxon>
        <taxon>Mammalia</taxon>
        <taxon>Eutheria</taxon>
        <taxon>Euarchontoglires</taxon>
        <taxon>Glires</taxon>
        <taxon>Rodentia</taxon>
        <taxon>Myomorpha</taxon>
        <taxon>Muroidea</taxon>
        <taxon>Muridae</taxon>
        <taxon>Murinae</taxon>
        <taxon>Mus</taxon>
        <taxon>Mus</taxon>
    </lineage>
</organism>
<dbReference type="EC" id="3.4.17.3"/>
<dbReference type="EMBL" id="AB021969">
    <property type="protein sequence ID" value="BAB03403.1"/>
    <property type="molecule type" value="mRNA"/>
</dbReference>
<dbReference type="EMBL" id="AF326477">
    <property type="protein sequence ID" value="AAK06821.1"/>
    <property type="molecule type" value="mRNA"/>
</dbReference>
<dbReference type="EMBL" id="BC014692">
    <property type="protein sequence ID" value="AAH14692.1"/>
    <property type="molecule type" value="mRNA"/>
</dbReference>
<dbReference type="CCDS" id="CCDS29840.1"/>
<dbReference type="RefSeq" id="NP_109628.1">
    <property type="nucleotide sequence ID" value="NM_030703.2"/>
</dbReference>
<dbReference type="SMR" id="Q9JJN5"/>
<dbReference type="BioGRID" id="220268">
    <property type="interactions" value="1"/>
</dbReference>
<dbReference type="FunCoup" id="Q9JJN5">
    <property type="interactions" value="217"/>
</dbReference>
<dbReference type="STRING" id="10090.ENSMUSP00000026210"/>
<dbReference type="GlyCosmos" id="Q9JJN5">
    <property type="glycosylation" value="3 sites, No reported glycans"/>
</dbReference>
<dbReference type="GlyGen" id="Q9JJN5">
    <property type="glycosylation" value="5 sites, 1 N-linked glycan (1 site)"/>
</dbReference>
<dbReference type="PhosphoSitePlus" id="Q9JJN5"/>
<dbReference type="CPTAC" id="non-CPTAC-3344"/>
<dbReference type="CPTAC" id="non-CPTAC-3696"/>
<dbReference type="PaxDb" id="10090-ENSMUSP00000026210"/>
<dbReference type="PeptideAtlas" id="Q9JJN5"/>
<dbReference type="ProteomicsDB" id="265683"/>
<dbReference type="Antibodypedia" id="31135">
    <property type="antibodies" value="239 antibodies from 30 providers"/>
</dbReference>
<dbReference type="DNASU" id="93721"/>
<dbReference type="Ensembl" id="ENSMUST00000026210.5">
    <property type="protein sequence ID" value="ENSMUSP00000026210.5"/>
    <property type="gene ID" value="ENSMUSG00000025196.5"/>
</dbReference>
<dbReference type="GeneID" id="93721"/>
<dbReference type="KEGG" id="mmu:93721"/>
<dbReference type="UCSC" id="uc008hpa.1">
    <property type="organism name" value="mouse"/>
</dbReference>
<dbReference type="AGR" id="MGI:2135874"/>
<dbReference type="CTD" id="1369"/>
<dbReference type="MGI" id="MGI:2135874">
    <property type="gene designation" value="Cpn1"/>
</dbReference>
<dbReference type="VEuPathDB" id="HostDB:ENSMUSG00000025196"/>
<dbReference type="eggNOG" id="KOG2649">
    <property type="taxonomic scope" value="Eukaryota"/>
</dbReference>
<dbReference type="GeneTree" id="ENSGT00940000158235"/>
<dbReference type="HOGENOM" id="CLU_006722_1_3_1"/>
<dbReference type="InParanoid" id="Q9JJN5"/>
<dbReference type="OMA" id="CEEYRHG"/>
<dbReference type="OrthoDB" id="10249045at2759"/>
<dbReference type="PhylomeDB" id="Q9JJN5"/>
<dbReference type="TreeFam" id="TF315592"/>
<dbReference type="BRENDA" id="3.4.17.3">
    <property type="organism ID" value="3474"/>
</dbReference>
<dbReference type="Reactome" id="R-MMU-977606">
    <property type="pathway name" value="Regulation of Complement cascade"/>
</dbReference>
<dbReference type="BioGRID-ORCS" id="93721">
    <property type="hits" value="2 hits in 78 CRISPR screens"/>
</dbReference>
<dbReference type="PRO" id="PR:Q9JJN5"/>
<dbReference type="Proteomes" id="UP000000589">
    <property type="component" value="Chromosome 19"/>
</dbReference>
<dbReference type="RNAct" id="Q9JJN5">
    <property type="molecule type" value="protein"/>
</dbReference>
<dbReference type="Bgee" id="ENSMUSG00000025196">
    <property type="expression patterns" value="Expressed in left lobe of liver and 91 other cell types or tissues"/>
</dbReference>
<dbReference type="GO" id="GO:0005615">
    <property type="term" value="C:extracellular space"/>
    <property type="evidence" value="ECO:0007669"/>
    <property type="project" value="Ensembl"/>
</dbReference>
<dbReference type="GO" id="GO:0004180">
    <property type="term" value="F:carboxypeptidase activity"/>
    <property type="evidence" value="ECO:0000314"/>
    <property type="project" value="MGI"/>
</dbReference>
<dbReference type="GO" id="GO:0004181">
    <property type="term" value="F:metallocarboxypeptidase activity"/>
    <property type="evidence" value="ECO:0007669"/>
    <property type="project" value="UniProtKB-EC"/>
</dbReference>
<dbReference type="GO" id="GO:0008270">
    <property type="term" value="F:zinc ion binding"/>
    <property type="evidence" value="ECO:0007669"/>
    <property type="project" value="InterPro"/>
</dbReference>
<dbReference type="GO" id="GO:0010815">
    <property type="term" value="P:bradykinin catabolic process"/>
    <property type="evidence" value="ECO:0007669"/>
    <property type="project" value="Ensembl"/>
</dbReference>
<dbReference type="GO" id="GO:0030163">
    <property type="term" value="P:protein catabolic process"/>
    <property type="evidence" value="ECO:0007669"/>
    <property type="project" value="Ensembl"/>
</dbReference>
<dbReference type="GO" id="GO:0006508">
    <property type="term" value="P:proteolysis"/>
    <property type="evidence" value="ECO:0007669"/>
    <property type="project" value="UniProtKB-KW"/>
</dbReference>
<dbReference type="GO" id="GO:0051384">
    <property type="term" value="P:response to glucocorticoid"/>
    <property type="evidence" value="ECO:0007669"/>
    <property type="project" value="Ensembl"/>
</dbReference>
<dbReference type="CDD" id="cd11308">
    <property type="entry name" value="Peptidase_M14NE-CP-C_like"/>
    <property type="match status" value="1"/>
</dbReference>
<dbReference type="FunFam" id="2.60.40.1120:FF:000011">
    <property type="entry name" value="Carboxypeptidase N catalytic chain"/>
    <property type="match status" value="1"/>
</dbReference>
<dbReference type="FunFam" id="3.40.630.10:FF:000013">
    <property type="entry name" value="carboxypeptidase N catalytic chain"/>
    <property type="match status" value="1"/>
</dbReference>
<dbReference type="Gene3D" id="2.60.40.1120">
    <property type="entry name" value="Carboxypeptidase-like, regulatory domain"/>
    <property type="match status" value="1"/>
</dbReference>
<dbReference type="Gene3D" id="3.40.630.10">
    <property type="entry name" value="Zn peptidases"/>
    <property type="match status" value="1"/>
</dbReference>
<dbReference type="InterPro" id="IPR008969">
    <property type="entry name" value="CarboxyPept-like_regulatory"/>
</dbReference>
<dbReference type="InterPro" id="IPR000834">
    <property type="entry name" value="Peptidase_M14"/>
</dbReference>
<dbReference type="InterPro" id="IPR050753">
    <property type="entry name" value="Peptidase_M14_domain"/>
</dbReference>
<dbReference type="PANTHER" id="PTHR11532:SF80">
    <property type="entry name" value="CARBOXYPEPTIDASE N CATALYTIC CHAIN"/>
    <property type="match status" value="1"/>
</dbReference>
<dbReference type="PANTHER" id="PTHR11532">
    <property type="entry name" value="PROTEASE M14 CARBOXYPEPTIDASE"/>
    <property type="match status" value="1"/>
</dbReference>
<dbReference type="Pfam" id="PF13620">
    <property type="entry name" value="CarboxypepD_reg"/>
    <property type="match status" value="1"/>
</dbReference>
<dbReference type="Pfam" id="PF00246">
    <property type="entry name" value="Peptidase_M14"/>
    <property type="match status" value="1"/>
</dbReference>
<dbReference type="PRINTS" id="PR00765">
    <property type="entry name" value="CRBOXYPTASEA"/>
</dbReference>
<dbReference type="SMART" id="SM00631">
    <property type="entry name" value="Zn_pept"/>
    <property type="match status" value="1"/>
</dbReference>
<dbReference type="SUPFAM" id="SSF49464">
    <property type="entry name" value="Carboxypeptidase regulatory domain-like"/>
    <property type="match status" value="1"/>
</dbReference>
<dbReference type="SUPFAM" id="SSF53187">
    <property type="entry name" value="Zn-dependent exopeptidases"/>
    <property type="match status" value="1"/>
</dbReference>
<dbReference type="PROSITE" id="PS00132">
    <property type="entry name" value="CARBOXYPEPT_ZN_1"/>
    <property type="match status" value="1"/>
</dbReference>
<dbReference type="PROSITE" id="PS00133">
    <property type="entry name" value="CARBOXYPEPT_ZN_2"/>
    <property type="match status" value="1"/>
</dbReference>
<dbReference type="PROSITE" id="PS52035">
    <property type="entry name" value="PEPTIDASE_M14"/>
    <property type="match status" value="1"/>
</dbReference>